<protein>
    <recommendedName>
        <fullName evidence="1">Elongation factor P</fullName>
        <shortName evidence="1">EF-P</shortName>
    </recommendedName>
</protein>
<gene>
    <name evidence="1" type="primary">efp</name>
    <name type="ordered locus">Nmul_A1268</name>
</gene>
<organism>
    <name type="scientific">Nitrosospira multiformis (strain ATCC 25196 / NCIMB 11849 / C 71)</name>
    <dbReference type="NCBI Taxonomy" id="323848"/>
    <lineage>
        <taxon>Bacteria</taxon>
        <taxon>Pseudomonadati</taxon>
        <taxon>Pseudomonadota</taxon>
        <taxon>Betaproteobacteria</taxon>
        <taxon>Nitrosomonadales</taxon>
        <taxon>Nitrosomonadaceae</taxon>
        <taxon>Nitrosospira</taxon>
    </lineage>
</organism>
<evidence type="ECO:0000255" key="1">
    <source>
        <dbReference type="HAMAP-Rule" id="MF_00141"/>
    </source>
</evidence>
<reference key="1">
    <citation type="submission" date="2005-08" db="EMBL/GenBank/DDBJ databases">
        <title>Complete sequence of chromosome 1 of Nitrosospira multiformis ATCC 25196.</title>
        <authorList>
            <person name="Copeland A."/>
            <person name="Lucas S."/>
            <person name="Lapidus A."/>
            <person name="Barry K."/>
            <person name="Detter J.C."/>
            <person name="Glavina T."/>
            <person name="Hammon N."/>
            <person name="Israni S."/>
            <person name="Pitluck S."/>
            <person name="Chain P."/>
            <person name="Malfatti S."/>
            <person name="Shin M."/>
            <person name="Vergez L."/>
            <person name="Schmutz J."/>
            <person name="Larimer F."/>
            <person name="Land M."/>
            <person name="Hauser L."/>
            <person name="Kyrpides N."/>
            <person name="Lykidis A."/>
            <person name="Richardson P."/>
        </authorList>
    </citation>
    <scope>NUCLEOTIDE SEQUENCE [LARGE SCALE GENOMIC DNA]</scope>
    <source>
        <strain>ATCC 25196 / NCIMB 11849 / C 71</strain>
    </source>
</reference>
<accession>Q2Y9K0</accession>
<name>EFP_NITMU</name>
<keyword id="KW-0963">Cytoplasm</keyword>
<keyword id="KW-0251">Elongation factor</keyword>
<keyword id="KW-0648">Protein biosynthesis</keyword>
<keyword id="KW-1185">Reference proteome</keyword>
<sequence length="188" mass="21513">MAKVLATEIRVGNLIEWDKRIWRVLKCYHVHVGGRGGAFMQVEMKDIEAGTKTNQRIRTEDKVERAFVEPREMTFLYQEGDNYIFMDKENYEQLSLSRDFLEGQYEYLLPNTDVQVNFHNDRAIGVQLPASVVLTITDTEPNLKGATATSSYKPATTETGLVVMVPPFVLQGERIKVNTDSGEYIERM</sequence>
<dbReference type="EMBL" id="CP000103">
    <property type="protein sequence ID" value="ABB74571.1"/>
    <property type="molecule type" value="Genomic_DNA"/>
</dbReference>
<dbReference type="RefSeq" id="WP_011380612.1">
    <property type="nucleotide sequence ID" value="NC_007614.1"/>
</dbReference>
<dbReference type="SMR" id="Q2Y9K0"/>
<dbReference type="STRING" id="323848.Nmul_A1268"/>
<dbReference type="KEGG" id="nmu:Nmul_A1268"/>
<dbReference type="eggNOG" id="COG0231">
    <property type="taxonomic scope" value="Bacteria"/>
</dbReference>
<dbReference type="HOGENOM" id="CLU_074944_1_1_4"/>
<dbReference type="OrthoDB" id="9801844at2"/>
<dbReference type="UniPathway" id="UPA00345"/>
<dbReference type="Proteomes" id="UP000002718">
    <property type="component" value="Chromosome"/>
</dbReference>
<dbReference type="GO" id="GO:0005737">
    <property type="term" value="C:cytoplasm"/>
    <property type="evidence" value="ECO:0007669"/>
    <property type="project" value="UniProtKB-SubCell"/>
</dbReference>
<dbReference type="GO" id="GO:0003746">
    <property type="term" value="F:translation elongation factor activity"/>
    <property type="evidence" value="ECO:0007669"/>
    <property type="project" value="UniProtKB-UniRule"/>
</dbReference>
<dbReference type="GO" id="GO:0043043">
    <property type="term" value="P:peptide biosynthetic process"/>
    <property type="evidence" value="ECO:0007669"/>
    <property type="project" value="InterPro"/>
</dbReference>
<dbReference type="CDD" id="cd04470">
    <property type="entry name" value="S1_EF-P_repeat_1"/>
    <property type="match status" value="1"/>
</dbReference>
<dbReference type="CDD" id="cd05794">
    <property type="entry name" value="S1_EF-P_repeat_2"/>
    <property type="match status" value="1"/>
</dbReference>
<dbReference type="FunFam" id="2.40.50.140:FF:000004">
    <property type="entry name" value="Elongation factor P"/>
    <property type="match status" value="1"/>
</dbReference>
<dbReference type="FunFam" id="2.40.50.140:FF:000009">
    <property type="entry name" value="Elongation factor P"/>
    <property type="match status" value="1"/>
</dbReference>
<dbReference type="Gene3D" id="2.30.30.30">
    <property type="match status" value="1"/>
</dbReference>
<dbReference type="Gene3D" id="2.40.50.140">
    <property type="entry name" value="Nucleic acid-binding proteins"/>
    <property type="match status" value="2"/>
</dbReference>
<dbReference type="HAMAP" id="MF_00141">
    <property type="entry name" value="EF_P"/>
    <property type="match status" value="1"/>
</dbReference>
<dbReference type="InterPro" id="IPR015365">
    <property type="entry name" value="Elong-fact-P_C"/>
</dbReference>
<dbReference type="InterPro" id="IPR012340">
    <property type="entry name" value="NA-bd_OB-fold"/>
</dbReference>
<dbReference type="InterPro" id="IPR014722">
    <property type="entry name" value="Rib_uL2_dom2"/>
</dbReference>
<dbReference type="InterPro" id="IPR020599">
    <property type="entry name" value="Transl_elong_fac_P/YeiP"/>
</dbReference>
<dbReference type="InterPro" id="IPR013185">
    <property type="entry name" value="Transl_elong_KOW-like"/>
</dbReference>
<dbReference type="InterPro" id="IPR001059">
    <property type="entry name" value="Transl_elong_P/YeiP_cen"/>
</dbReference>
<dbReference type="InterPro" id="IPR013852">
    <property type="entry name" value="Transl_elong_P/YeiP_CS"/>
</dbReference>
<dbReference type="InterPro" id="IPR011768">
    <property type="entry name" value="Transl_elongation_fac_P"/>
</dbReference>
<dbReference type="InterPro" id="IPR008991">
    <property type="entry name" value="Translation_prot_SH3-like_sf"/>
</dbReference>
<dbReference type="NCBIfam" id="TIGR00038">
    <property type="entry name" value="efp"/>
    <property type="match status" value="1"/>
</dbReference>
<dbReference type="NCBIfam" id="NF001810">
    <property type="entry name" value="PRK00529.1"/>
    <property type="match status" value="1"/>
</dbReference>
<dbReference type="PANTHER" id="PTHR30053">
    <property type="entry name" value="ELONGATION FACTOR P"/>
    <property type="match status" value="1"/>
</dbReference>
<dbReference type="PANTHER" id="PTHR30053:SF14">
    <property type="entry name" value="TRANSLATION ELONGATION FACTOR KOW-LIKE DOMAIN-CONTAINING PROTEIN"/>
    <property type="match status" value="1"/>
</dbReference>
<dbReference type="Pfam" id="PF01132">
    <property type="entry name" value="EFP"/>
    <property type="match status" value="1"/>
</dbReference>
<dbReference type="Pfam" id="PF08207">
    <property type="entry name" value="EFP_N"/>
    <property type="match status" value="1"/>
</dbReference>
<dbReference type="Pfam" id="PF09285">
    <property type="entry name" value="Elong-fact-P_C"/>
    <property type="match status" value="1"/>
</dbReference>
<dbReference type="PIRSF" id="PIRSF005901">
    <property type="entry name" value="EF-P"/>
    <property type="match status" value="1"/>
</dbReference>
<dbReference type="SMART" id="SM01185">
    <property type="entry name" value="EFP"/>
    <property type="match status" value="1"/>
</dbReference>
<dbReference type="SMART" id="SM00841">
    <property type="entry name" value="Elong-fact-P_C"/>
    <property type="match status" value="1"/>
</dbReference>
<dbReference type="SUPFAM" id="SSF50249">
    <property type="entry name" value="Nucleic acid-binding proteins"/>
    <property type="match status" value="2"/>
</dbReference>
<dbReference type="SUPFAM" id="SSF50104">
    <property type="entry name" value="Translation proteins SH3-like domain"/>
    <property type="match status" value="1"/>
</dbReference>
<dbReference type="PROSITE" id="PS01275">
    <property type="entry name" value="EFP"/>
    <property type="match status" value="1"/>
</dbReference>
<proteinExistence type="inferred from homology"/>
<feature type="chain" id="PRO_1000010793" description="Elongation factor P">
    <location>
        <begin position="1"/>
        <end position="188"/>
    </location>
</feature>
<comment type="function">
    <text evidence="1">Involved in peptide bond synthesis. Stimulates efficient translation and peptide-bond synthesis on native or reconstituted 70S ribosomes in vitro. Probably functions indirectly by altering the affinity of the ribosome for aminoacyl-tRNA, thus increasing their reactivity as acceptors for peptidyl transferase.</text>
</comment>
<comment type="pathway">
    <text evidence="1">Protein biosynthesis; polypeptide chain elongation.</text>
</comment>
<comment type="subcellular location">
    <subcellularLocation>
        <location evidence="1">Cytoplasm</location>
    </subcellularLocation>
</comment>
<comment type="similarity">
    <text evidence="1">Belongs to the elongation factor P family.</text>
</comment>